<organism>
    <name type="scientific">Streptococcus pneumoniae serotype 2 (strain D39 / NCTC 7466)</name>
    <dbReference type="NCBI Taxonomy" id="373153"/>
    <lineage>
        <taxon>Bacteria</taxon>
        <taxon>Bacillati</taxon>
        <taxon>Bacillota</taxon>
        <taxon>Bacilli</taxon>
        <taxon>Lactobacillales</taxon>
        <taxon>Streptococcaceae</taxon>
        <taxon>Streptococcus</taxon>
    </lineage>
</organism>
<comment type="function">
    <text evidence="1">One of the primary rRNA binding proteins, it binds directly to 16S rRNA central domain where it helps coordinate assembly of the platform of the 30S subunit.</text>
</comment>
<comment type="subunit">
    <text evidence="1">Part of the 30S ribosomal subunit. Contacts proteins S5 and S12.</text>
</comment>
<comment type="similarity">
    <text evidence="1">Belongs to the universal ribosomal protein uS8 family.</text>
</comment>
<feature type="chain" id="PRO_0000290940" description="Small ribosomal subunit protein uS8">
    <location>
        <begin position="1"/>
        <end position="132"/>
    </location>
</feature>
<gene>
    <name evidence="1" type="primary">rpsH</name>
    <name type="ordered locus">SPD_0207</name>
</gene>
<proteinExistence type="inferred from homology"/>
<dbReference type="EMBL" id="CP000410">
    <property type="protein sequence ID" value="ABJ54001.1"/>
    <property type="molecule type" value="Genomic_DNA"/>
</dbReference>
<dbReference type="RefSeq" id="WP_000245505.1">
    <property type="nucleotide sequence ID" value="NZ_JAMLJR010000002.1"/>
</dbReference>
<dbReference type="SMR" id="Q04MM2"/>
<dbReference type="PaxDb" id="373153-SPD_0207"/>
<dbReference type="GeneID" id="45652295"/>
<dbReference type="KEGG" id="spd:SPD_0207"/>
<dbReference type="eggNOG" id="COG0096">
    <property type="taxonomic scope" value="Bacteria"/>
</dbReference>
<dbReference type="HOGENOM" id="CLU_098428_0_2_9"/>
<dbReference type="BioCyc" id="SPNE373153:G1G6V-230-MONOMER"/>
<dbReference type="Proteomes" id="UP000001452">
    <property type="component" value="Chromosome"/>
</dbReference>
<dbReference type="GO" id="GO:1990904">
    <property type="term" value="C:ribonucleoprotein complex"/>
    <property type="evidence" value="ECO:0007669"/>
    <property type="project" value="UniProtKB-KW"/>
</dbReference>
<dbReference type="GO" id="GO:0005840">
    <property type="term" value="C:ribosome"/>
    <property type="evidence" value="ECO:0007669"/>
    <property type="project" value="UniProtKB-KW"/>
</dbReference>
<dbReference type="GO" id="GO:0019843">
    <property type="term" value="F:rRNA binding"/>
    <property type="evidence" value="ECO:0007669"/>
    <property type="project" value="UniProtKB-UniRule"/>
</dbReference>
<dbReference type="GO" id="GO:0003735">
    <property type="term" value="F:structural constituent of ribosome"/>
    <property type="evidence" value="ECO:0007669"/>
    <property type="project" value="InterPro"/>
</dbReference>
<dbReference type="GO" id="GO:0006412">
    <property type="term" value="P:translation"/>
    <property type="evidence" value="ECO:0007669"/>
    <property type="project" value="UniProtKB-UniRule"/>
</dbReference>
<dbReference type="FunFam" id="3.30.1370.30:FF:000002">
    <property type="entry name" value="30S ribosomal protein S8"/>
    <property type="match status" value="1"/>
</dbReference>
<dbReference type="FunFam" id="3.30.1490.10:FF:000001">
    <property type="entry name" value="30S ribosomal protein S8"/>
    <property type="match status" value="1"/>
</dbReference>
<dbReference type="Gene3D" id="3.30.1370.30">
    <property type="match status" value="1"/>
</dbReference>
<dbReference type="Gene3D" id="3.30.1490.10">
    <property type="match status" value="1"/>
</dbReference>
<dbReference type="HAMAP" id="MF_01302_B">
    <property type="entry name" value="Ribosomal_uS8_B"/>
    <property type="match status" value="1"/>
</dbReference>
<dbReference type="InterPro" id="IPR000630">
    <property type="entry name" value="Ribosomal_uS8"/>
</dbReference>
<dbReference type="InterPro" id="IPR047863">
    <property type="entry name" value="Ribosomal_uS8_CS"/>
</dbReference>
<dbReference type="InterPro" id="IPR035987">
    <property type="entry name" value="Ribosomal_uS8_sf"/>
</dbReference>
<dbReference type="NCBIfam" id="NF001109">
    <property type="entry name" value="PRK00136.1"/>
    <property type="match status" value="1"/>
</dbReference>
<dbReference type="PANTHER" id="PTHR11758">
    <property type="entry name" value="40S RIBOSOMAL PROTEIN S15A"/>
    <property type="match status" value="1"/>
</dbReference>
<dbReference type="Pfam" id="PF00410">
    <property type="entry name" value="Ribosomal_S8"/>
    <property type="match status" value="1"/>
</dbReference>
<dbReference type="SUPFAM" id="SSF56047">
    <property type="entry name" value="Ribosomal protein S8"/>
    <property type="match status" value="1"/>
</dbReference>
<dbReference type="PROSITE" id="PS00053">
    <property type="entry name" value="RIBOSOMAL_S8"/>
    <property type="match status" value="1"/>
</dbReference>
<name>RS8_STRP2</name>
<reference key="1">
    <citation type="journal article" date="2007" name="J. Bacteriol.">
        <title>Genome sequence of Avery's virulent serotype 2 strain D39 of Streptococcus pneumoniae and comparison with that of unencapsulated laboratory strain R6.</title>
        <authorList>
            <person name="Lanie J.A."/>
            <person name="Ng W.-L."/>
            <person name="Kazmierczak K.M."/>
            <person name="Andrzejewski T.M."/>
            <person name="Davidsen T.M."/>
            <person name="Wayne K.J."/>
            <person name="Tettelin H."/>
            <person name="Glass J.I."/>
            <person name="Winkler M.E."/>
        </authorList>
    </citation>
    <scope>NUCLEOTIDE SEQUENCE [LARGE SCALE GENOMIC DNA]</scope>
    <source>
        <strain>D39 / NCTC 7466</strain>
    </source>
</reference>
<accession>Q04MM2</accession>
<protein>
    <recommendedName>
        <fullName evidence="1">Small ribosomal subunit protein uS8</fullName>
    </recommendedName>
    <alternativeName>
        <fullName evidence="2">30S ribosomal protein S8</fullName>
    </alternativeName>
</protein>
<evidence type="ECO:0000255" key="1">
    <source>
        <dbReference type="HAMAP-Rule" id="MF_01302"/>
    </source>
</evidence>
<evidence type="ECO:0000305" key="2"/>
<sequence length="132" mass="14754">MVMTDPIADFLTRIRNANQAKHEVLEVPASNIKKGIAEILKREGFVKNVEIIEDDKQGVIRVFLKYGPNGEKVITNLKRVSKPGLRVYKKREDLPKVLNGLGIAILSTSEGLLTDKEARQKNVGGEVIAYVW</sequence>
<keyword id="KW-1185">Reference proteome</keyword>
<keyword id="KW-0687">Ribonucleoprotein</keyword>
<keyword id="KW-0689">Ribosomal protein</keyword>
<keyword id="KW-0694">RNA-binding</keyword>
<keyword id="KW-0699">rRNA-binding</keyword>